<accession>B5QX75</accession>
<feature type="chain" id="PRO_1000139291" description="Cyclic pyranopterin monophosphate synthase">
    <location>
        <begin position="1"/>
        <end position="161"/>
    </location>
</feature>
<feature type="active site" evidence="1">
    <location>
        <position position="128"/>
    </location>
</feature>
<feature type="binding site" evidence="1">
    <location>
        <begin position="75"/>
        <end position="77"/>
    </location>
    <ligand>
        <name>substrate</name>
    </ligand>
</feature>
<feature type="binding site" evidence="1">
    <location>
        <begin position="113"/>
        <end position="114"/>
    </location>
    <ligand>
        <name>substrate</name>
    </ligand>
</feature>
<dbReference type="EC" id="4.6.1.17" evidence="1"/>
<dbReference type="EMBL" id="AM933172">
    <property type="protein sequence ID" value="CAR32335.1"/>
    <property type="molecule type" value="Genomic_DNA"/>
</dbReference>
<dbReference type="RefSeq" id="WP_000080897.1">
    <property type="nucleotide sequence ID" value="NC_011294.1"/>
</dbReference>
<dbReference type="SMR" id="B5QX75"/>
<dbReference type="KEGG" id="set:SEN0750"/>
<dbReference type="HOGENOM" id="CLU_074693_1_1_6"/>
<dbReference type="UniPathway" id="UPA00344"/>
<dbReference type="Proteomes" id="UP000000613">
    <property type="component" value="Chromosome"/>
</dbReference>
<dbReference type="GO" id="GO:0061799">
    <property type="term" value="F:cyclic pyranopterin monophosphate synthase activity"/>
    <property type="evidence" value="ECO:0007669"/>
    <property type="project" value="UniProtKB-UniRule"/>
</dbReference>
<dbReference type="GO" id="GO:0061798">
    <property type="term" value="F:GTP 3',8'-cyclase activity"/>
    <property type="evidence" value="ECO:0007669"/>
    <property type="project" value="TreeGrafter"/>
</dbReference>
<dbReference type="GO" id="GO:0006777">
    <property type="term" value="P:Mo-molybdopterin cofactor biosynthetic process"/>
    <property type="evidence" value="ECO:0007669"/>
    <property type="project" value="UniProtKB-UniRule"/>
</dbReference>
<dbReference type="CDD" id="cd01420">
    <property type="entry name" value="MoaC_PE"/>
    <property type="match status" value="1"/>
</dbReference>
<dbReference type="FunFam" id="3.30.70.640:FF:000001">
    <property type="entry name" value="Cyclic pyranopterin monophosphate synthase"/>
    <property type="match status" value="1"/>
</dbReference>
<dbReference type="Gene3D" id="3.30.70.640">
    <property type="entry name" value="Molybdopterin cofactor biosynthesis C (MoaC) domain"/>
    <property type="match status" value="1"/>
</dbReference>
<dbReference type="HAMAP" id="MF_01224_B">
    <property type="entry name" value="MoaC_B"/>
    <property type="match status" value="1"/>
</dbReference>
<dbReference type="InterPro" id="IPR023045">
    <property type="entry name" value="MoaC"/>
</dbReference>
<dbReference type="InterPro" id="IPR047594">
    <property type="entry name" value="MoaC_bact/euk"/>
</dbReference>
<dbReference type="InterPro" id="IPR036522">
    <property type="entry name" value="MoaC_sf"/>
</dbReference>
<dbReference type="InterPro" id="IPR050105">
    <property type="entry name" value="MoCo_biosynth_MoaA/MoaC"/>
</dbReference>
<dbReference type="InterPro" id="IPR002820">
    <property type="entry name" value="Mopterin_CF_biosynth-C_dom"/>
</dbReference>
<dbReference type="NCBIfam" id="TIGR00581">
    <property type="entry name" value="moaC"/>
    <property type="match status" value="1"/>
</dbReference>
<dbReference type="NCBIfam" id="NF006870">
    <property type="entry name" value="PRK09364.1"/>
    <property type="match status" value="1"/>
</dbReference>
<dbReference type="PANTHER" id="PTHR22960:SF0">
    <property type="entry name" value="MOLYBDENUM COFACTOR BIOSYNTHESIS PROTEIN 1"/>
    <property type="match status" value="1"/>
</dbReference>
<dbReference type="PANTHER" id="PTHR22960">
    <property type="entry name" value="MOLYBDOPTERIN COFACTOR SYNTHESIS PROTEIN A"/>
    <property type="match status" value="1"/>
</dbReference>
<dbReference type="Pfam" id="PF01967">
    <property type="entry name" value="MoaC"/>
    <property type="match status" value="1"/>
</dbReference>
<dbReference type="SUPFAM" id="SSF55040">
    <property type="entry name" value="Molybdenum cofactor biosynthesis protein C, MoaC"/>
    <property type="match status" value="1"/>
</dbReference>
<reference key="1">
    <citation type="journal article" date="2008" name="Genome Res.">
        <title>Comparative genome analysis of Salmonella enteritidis PT4 and Salmonella gallinarum 287/91 provides insights into evolutionary and host adaptation pathways.</title>
        <authorList>
            <person name="Thomson N.R."/>
            <person name="Clayton D.J."/>
            <person name="Windhorst D."/>
            <person name="Vernikos G."/>
            <person name="Davidson S."/>
            <person name="Churcher C."/>
            <person name="Quail M.A."/>
            <person name="Stevens M."/>
            <person name="Jones M.A."/>
            <person name="Watson M."/>
            <person name="Barron A."/>
            <person name="Layton A."/>
            <person name="Pickard D."/>
            <person name="Kingsley R.A."/>
            <person name="Bignell A."/>
            <person name="Clark L."/>
            <person name="Harris B."/>
            <person name="Ormond D."/>
            <person name="Abdellah Z."/>
            <person name="Brooks K."/>
            <person name="Cherevach I."/>
            <person name="Chillingworth T."/>
            <person name="Woodward J."/>
            <person name="Norberczak H."/>
            <person name="Lord A."/>
            <person name="Arrowsmith C."/>
            <person name="Jagels K."/>
            <person name="Moule S."/>
            <person name="Mungall K."/>
            <person name="Saunders M."/>
            <person name="Whitehead S."/>
            <person name="Chabalgoity J.A."/>
            <person name="Maskell D."/>
            <person name="Humphreys T."/>
            <person name="Roberts M."/>
            <person name="Barrow P.A."/>
            <person name="Dougan G."/>
            <person name="Parkhill J."/>
        </authorList>
    </citation>
    <scope>NUCLEOTIDE SEQUENCE [LARGE SCALE GENOMIC DNA]</scope>
    <source>
        <strain>P125109</strain>
    </source>
</reference>
<comment type="function">
    <text evidence="1">Catalyzes the conversion of (8S)-3',8-cyclo-7,8-dihydroguanosine 5'-triphosphate to cyclic pyranopterin monophosphate (cPMP).</text>
</comment>
<comment type="catalytic activity">
    <reaction evidence="1">
        <text>(8S)-3',8-cyclo-7,8-dihydroguanosine 5'-triphosphate = cyclic pyranopterin phosphate + diphosphate</text>
        <dbReference type="Rhea" id="RHEA:49580"/>
        <dbReference type="ChEBI" id="CHEBI:33019"/>
        <dbReference type="ChEBI" id="CHEBI:59648"/>
        <dbReference type="ChEBI" id="CHEBI:131766"/>
        <dbReference type="EC" id="4.6.1.17"/>
    </reaction>
</comment>
<comment type="pathway">
    <text evidence="1">Cofactor biosynthesis; molybdopterin biosynthesis.</text>
</comment>
<comment type="subunit">
    <text evidence="1">Homohexamer; trimer of dimers.</text>
</comment>
<comment type="similarity">
    <text evidence="1">Belongs to the MoaC family.</text>
</comment>
<gene>
    <name evidence="1" type="primary">moaC</name>
    <name type="ordered locus">SEN0750</name>
</gene>
<evidence type="ECO:0000255" key="1">
    <source>
        <dbReference type="HAMAP-Rule" id="MF_01224"/>
    </source>
</evidence>
<sequence>MSQLTHINAAGEAHMVDVSAKAETVREARAEAFVTMRSETLAMIVDGKHHKGDVFATARIAGIQAAKRTWELIPLCHPLLLSKVEIQLQAEPEYNRVRIESLCRLTGKTGVEMEALTAASVAALTIYDMCKAVQKDMVIGPVRLLAKSGGKSGDFKVDAHD</sequence>
<protein>
    <recommendedName>
        <fullName evidence="1">Cyclic pyranopterin monophosphate synthase</fullName>
        <ecNumber evidence="1">4.6.1.17</ecNumber>
    </recommendedName>
    <alternativeName>
        <fullName evidence="1">Molybdenum cofactor biosynthesis protein C</fullName>
    </alternativeName>
</protein>
<name>MOAC_SALEP</name>
<keyword id="KW-0456">Lyase</keyword>
<keyword id="KW-0501">Molybdenum cofactor biosynthesis</keyword>
<organism>
    <name type="scientific">Salmonella enteritidis PT4 (strain P125109)</name>
    <dbReference type="NCBI Taxonomy" id="550537"/>
    <lineage>
        <taxon>Bacteria</taxon>
        <taxon>Pseudomonadati</taxon>
        <taxon>Pseudomonadota</taxon>
        <taxon>Gammaproteobacteria</taxon>
        <taxon>Enterobacterales</taxon>
        <taxon>Enterobacteriaceae</taxon>
        <taxon>Salmonella</taxon>
    </lineage>
</organism>
<proteinExistence type="inferred from homology"/>